<accession>Q8R4P9</accession>
<accession>Q3TCQ0</accession>
<accession>Q3V0D1</accession>
<accession>Q8R4S1</accession>
<organism>
    <name type="scientific">Mus musculus</name>
    <name type="common">Mouse</name>
    <dbReference type="NCBI Taxonomy" id="10090"/>
    <lineage>
        <taxon>Eukaryota</taxon>
        <taxon>Metazoa</taxon>
        <taxon>Chordata</taxon>
        <taxon>Craniata</taxon>
        <taxon>Vertebrata</taxon>
        <taxon>Euteleostomi</taxon>
        <taxon>Mammalia</taxon>
        <taxon>Eutheria</taxon>
        <taxon>Euarchontoglires</taxon>
        <taxon>Glires</taxon>
        <taxon>Rodentia</taxon>
        <taxon>Myomorpha</taxon>
        <taxon>Muroidea</taxon>
        <taxon>Muridae</taxon>
        <taxon>Murinae</taxon>
        <taxon>Mus</taxon>
        <taxon>Mus</taxon>
    </lineage>
</organism>
<proteinExistence type="evidence at protein level"/>
<gene>
    <name type="primary">Abcc10</name>
    <name type="synonym">Mrp7</name>
</gene>
<feature type="chain" id="PRO_0000253577" description="ATP-binding cassette sub-family C member 10">
    <location>
        <begin position="1"/>
        <end position="1501"/>
    </location>
</feature>
<feature type="transmembrane region" description="Helical" evidence="4">
    <location>
        <begin position="32"/>
        <end position="52"/>
    </location>
</feature>
<feature type="transmembrane region" description="Helical" evidence="4">
    <location>
        <begin position="70"/>
        <end position="90"/>
    </location>
</feature>
<feature type="transmembrane region" description="Helical" evidence="4">
    <location>
        <begin position="102"/>
        <end position="122"/>
    </location>
</feature>
<feature type="transmembrane region" description="Helical" evidence="4">
    <location>
        <begin position="133"/>
        <end position="153"/>
    </location>
</feature>
<feature type="transmembrane region" description="Helical" evidence="4">
    <location>
        <begin position="172"/>
        <end position="192"/>
    </location>
</feature>
<feature type="transmembrane region" description="Helical" evidence="4">
    <location>
        <begin position="294"/>
        <end position="314"/>
    </location>
</feature>
<feature type="transmembrane region" description="Helical" evidence="4">
    <location>
        <begin position="321"/>
        <end position="341"/>
    </location>
</feature>
<feature type="transmembrane region" description="Helical" evidence="4">
    <location>
        <begin position="392"/>
        <end position="412"/>
    </location>
</feature>
<feature type="transmembrane region" description="Helical" evidence="4">
    <location>
        <begin position="415"/>
        <end position="435"/>
    </location>
</feature>
<feature type="transmembrane region" description="Helical" evidence="4">
    <location>
        <begin position="508"/>
        <end position="528"/>
    </location>
</feature>
<feature type="transmembrane region" description="Helical" evidence="4">
    <location>
        <begin position="539"/>
        <end position="559"/>
    </location>
</feature>
<feature type="transmembrane region" description="Helical" evidence="4">
    <location>
        <begin position="877"/>
        <end position="897"/>
    </location>
</feature>
<feature type="transmembrane region" description="Helical" evidence="4">
    <location>
        <begin position="969"/>
        <end position="989"/>
    </location>
</feature>
<feature type="transmembrane region" description="Helical" evidence="4">
    <location>
        <begin position="1033"/>
        <end position="1053"/>
    </location>
</feature>
<feature type="transmembrane region" description="Helical" evidence="4">
    <location>
        <begin position="1056"/>
        <end position="1076"/>
    </location>
</feature>
<feature type="transmembrane region" description="Helical" evidence="4">
    <location>
        <begin position="1158"/>
        <end position="1178"/>
    </location>
</feature>
<feature type="transmembrane region" description="Helical" evidence="4">
    <location>
        <begin position="1187"/>
        <end position="1207"/>
    </location>
</feature>
<feature type="domain" description="ABC transmembrane type-1 1" evidence="4">
    <location>
        <begin position="286"/>
        <end position="564"/>
    </location>
</feature>
<feature type="domain" description="ABC transporter 1" evidence="3">
    <location>
        <begin position="599"/>
        <end position="825"/>
    </location>
</feature>
<feature type="domain" description="ABC transmembrane type-1 2" evidence="4">
    <location>
        <begin position="887"/>
        <end position="1215"/>
    </location>
</feature>
<feature type="domain" description="ABC transporter 2" evidence="3">
    <location>
        <begin position="1255"/>
        <end position="1488"/>
    </location>
</feature>
<feature type="binding site" evidence="3">
    <location>
        <begin position="634"/>
        <end position="641"/>
    </location>
    <ligand>
        <name>ATP</name>
        <dbReference type="ChEBI" id="CHEBI:30616"/>
        <label>1</label>
    </ligand>
</feature>
<feature type="binding site" evidence="3">
    <location>
        <begin position="1289"/>
        <end position="1296"/>
    </location>
    <ligand>
        <name>ATP</name>
        <dbReference type="ChEBI" id="CHEBI:30616"/>
        <label>2</label>
    </ligand>
</feature>
<feature type="modified residue" description="Phosphothreonine" evidence="1">
    <location>
        <position position="464"/>
    </location>
</feature>
<feature type="modified residue" description="Phosphoserine" evidence="1">
    <location>
        <position position="468"/>
    </location>
</feature>
<feature type="splice variant" id="VSP_021081" description="In isoform 2." evidence="7">
    <location>
        <begin position="1"/>
        <end position="41"/>
    </location>
</feature>
<feature type="splice variant" id="VSP_021082" description="In isoform 2." evidence="7">
    <original>LAVLSACHLGTP</original>
    <variation>MICGLLFFSFFP</variation>
    <location>
        <begin position="42"/>
        <end position="53"/>
    </location>
</feature>
<feature type="splice variant" id="VSP_021083" description="In isoform 3." evidence="8">
    <original>M</original>
    <variation>MGESQACQRSQREAKNGHWQCSALLT</variation>
    <location>
        <position position="1377"/>
    </location>
</feature>
<comment type="function">
    <text evidence="1">ATP-dependent transporter of the ATP-binding cassette (ABC) family that actively extrudes physiological compounds, and xenobiotics from cells. Lipophilic anion transporter that mediates ATP-dependent transport of glucuronide conjugates such as estradiol-17-beta-o-glucuronide and GSH conjugates such as leukotriene C4 (LTC4). Does not transport glycocholic acid, taurocholic acid, MTX, folic acid, cAMP, or cGMP. May contribute to regulate the transport of organic compounds in testes across the blood-testis-barrier (By similarity).</text>
</comment>
<comment type="catalytic activity">
    <reaction evidence="1">
        <text>ATP + H2O + xenobioticSide 1 = ADP + phosphate + xenobioticSide 2.</text>
        <dbReference type="EC" id="7.6.2.2"/>
    </reaction>
</comment>
<comment type="catalytic activity">
    <reaction evidence="1">
        <text>an S-substituted glutathione(in) + ATP + H2O = an S-substituted glutathione(out) + ADP + phosphate + H(+)</text>
        <dbReference type="Rhea" id="RHEA:19121"/>
        <dbReference type="ChEBI" id="CHEBI:15377"/>
        <dbReference type="ChEBI" id="CHEBI:15378"/>
        <dbReference type="ChEBI" id="CHEBI:30616"/>
        <dbReference type="ChEBI" id="CHEBI:43474"/>
        <dbReference type="ChEBI" id="CHEBI:90779"/>
        <dbReference type="ChEBI" id="CHEBI:456216"/>
        <dbReference type="EC" id="7.6.2.3"/>
    </reaction>
    <physiologicalReaction direction="left-to-right" evidence="1">
        <dbReference type="Rhea" id="RHEA:19122"/>
    </physiologicalReaction>
</comment>
<comment type="catalytic activity">
    <reaction evidence="1">
        <text>17beta-estradiol 17-O-(beta-D-glucuronate)(in) + ATP + H2O = 17beta-estradiol 17-O-(beta-D-glucuronate)(out) + ADP + phosphate + H(+)</text>
        <dbReference type="Rhea" id="RHEA:60128"/>
        <dbReference type="ChEBI" id="CHEBI:15377"/>
        <dbReference type="ChEBI" id="CHEBI:15378"/>
        <dbReference type="ChEBI" id="CHEBI:30616"/>
        <dbReference type="ChEBI" id="CHEBI:43474"/>
        <dbReference type="ChEBI" id="CHEBI:82961"/>
        <dbReference type="ChEBI" id="CHEBI:456216"/>
    </reaction>
    <physiologicalReaction direction="left-to-right" evidence="1">
        <dbReference type="Rhea" id="RHEA:60129"/>
    </physiologicalReaction>
</comment>
<comment type="catalytic activity">
    <reaction evidence="1">
        <text>leukotriene C4(in) + ATP + H2O = leukotriene C4(out) + ADP + phosphate + H(+)</text>
        <dbReference type="Rhea" id="RHEA:38963"/>
        <dbReference type="ChEBI" id="CHEBI:15377"/>
        <dbReference type="ChEBI" id="CHEBI:15378"/>
        <dbReference type="ChEBI" id="CHEBI:30616"/>
        <dbReference type="ChEBI" id="CHEBI:43474"/>
        <dbReference type="ChEBI" id="CHEBI:57973"/>
        <dbReference type="ChEBI" id="CHEBI:456216"/>
    </reaction>
    <physiologicalReaction direction="left-to-right" evidence="1">
        <dbReference type="Rhea" id="RHEA:38964"/>
    </physiologicalReaction>
</comment>
<comment type="subcellular location">
    <subcellularLocation>
        <location evidence="1">Cell membrane</location>
        <topology evidence="1 4">Multi-pass membrane protein</topology>
    </subcellularLocation>
    <subcellularLocation>
        <location evidence="1">Basolateral cell membrane</location>
        <topology evidence="2">Multi-pass membrane protein</topology>
    </subcellularLocation>
    <subcellularLocation>
        <location evidence="1">Basal cell membrane</location>
        <topology evidence="2">Multi-pass membrane protein</topology>
    </subcellularLocation>
</comment>
<comment type="alternative products">
    <event type="alternative splicing"/>
    <isoform>
        <id>Q8R4P9-1</id>
        <name>1</name>
        <name>Mrp7B</name>
        <sequence type="displayed"/>
    </isoform>
    <isoform>
        <id>Q8R4P9-2</id>
        <name>2</name>
        <name>Mrp7A</name>
        <sequence type="described" ref="VSP_021081 VSP_021082"/>
    </isoform>
    <isoform>
        <id>Q8R4P9-3</id>
        <name>3</name>
        <sequence type="described" ref="VSP_021083"/>
    </isoform>
</comment>
<comment type="tissue specificity">
    <text evidence="5">Expressed in all tissues tested including liver, brain, heart, skeletal muscle, kidney and spleen.</text>
</comment>
<comment type="developmental stage">
    <text evidence="5">Expressed in embryo.</text>
</comment>
<comment type="disruption phenotype">
    <text evidence="6">Deficient mice exhibit increased sensitivity to paclitaxel-induced mortality associated with weight loss, decreased white blood cell, and small spleen and thymus cortex due to apoptosis and/or depopulation of lymphoid cells.</text>
</comment>
<comment type="similarity">
    <text evidence="9">Belongs to the ABC transporter superfamily. ABCC family. Conjugate transporter (TC 3.A.1.208) subfamily.</text>
</comment>
<name>MRP7_MOUSE</name>
<keyword id="KW-0025">Alternative splicing</keyword>
<keyword id="KW-0067">ATP-binding</keyword>
<keyword id="KW-1003">Cell membrane</keyword>
<keyword id="KW-0445">Lipid transport</keyword>
<keyword id="KW-0472">Membrane</keyword>
<keyword id="KW-0547">Nucleotide-binding</keyword>
<keyword id="KW-0597">Phosphoprotein</keyword>
<keyword id="KW-1185">Reference proteome</keyword>
<keyword id="KW-0677">Repeat</keyword>
<keyword id="KW-1278">Translocase</keyword>
<keyword id="KW-0812">Transmembrane</keyword>
<keyword id="KW-1133">Transmembrane helix</keyword>
<keyword id="KW-0813">Transport</keyword>
<evidence type="ECO:0000250" key="1">
    <source>
        <dbReference type="UniProtKB" id="Q5T3U5"/>
    </source>
</evidence>
<evidence type="ECO:0000255" key="2"/>
<evidence type="ECO:0000255" key="3">
    <source>
        <dbReference type="PROSITE-ProRule" id="PRU00434"/>
    </source>
</evidence>
<evidence type="ECO:0000255" key="4">
    <source>
        <dbReference type="PROSITE-ProRule" id="PRU00441"/>
    </source>
</evidence>
<evidence type="ECO:0000269" key="5">
    <source>
    </source>
</evidence>
<evidence type="ECO:0000269" key="6">
    <source>
    </source>
</evidence>
<evidence type="ECO:0000303" key="7">
    <source>
    </source>
</evidence>
<evidence type="ECO:0000303" key="8">
    <source>
    </source>
</evidence>
<evidence type="ECO:0000305" key="9"/>
<protein>
    <recommendedName>
        <fullName>ATP-binding cassette sub-family C member 10</fullName>
        <ecNumber evidence="1">7.6.2.2</ecNumber>
        <ecNumber evidence="1">7.6.2.3</ecNumber>
    </recommendedName>
    <alternativeName>
        <fullName>Multidrug resistance-associated protein 7</fullName>
    </alternativeName>
</protein>
<reference key="1">
    <citation type="journal article" date="2002" name="Gene">
        <title>cDNA cloning and genomic organization of the murine MRP7, a new ATP-binding cassette transporter.</title>
        <authorList>
            <person name="Kao H.-H."/>
            <person name="Huang J.-D."/>
            <person name="Chang M.-S."/>
        </authorList>
    </citation>
    <scope>NUCLEOTIDE SEQUENCE [MRNA] (ISOFORMS 1 AND 2)</scope>
    <scope>TISSUE SPECIFICITY</scope>
    <scope>DEVELOPMENTAL STAGE</scope>
    <source>
        <tissue>Spleen</tissue>
    </source>
</reference>
<reference key="2">
    <citation type="journal article" date="2005" name="Science">
        <title>The transcriptional landscape of the mammalian genome.</title>
        <authorList>
            <person name="Carninci P."/>
            <person name="Kasukawa T."/>
            <person name="Katayama S."/>
            <person name="Gough J."/>
            <person name="Frith M.C."/>
            <person name="Maeda N."/>
            <person name="Oyama R."/>
            <person name="Ravasi T."/>
            <person name="Lenhard B."/>
            <person name="Wells C."/>
            <person name="Kodzius R."/>
            <person name="Shimokawa K."/>
            <person name="Bajic V.B."/>
            <person name="Brenner S.E."/>
            <person name="Batalov S."/>
            <person name="Forrest A.R."/>
            <person name="Zavolan M."/>
            <person name="Davis M.J."/>
            <person name="Wilming L.G."/>
            <person name="Aidinis V."/>
            <person name="Allen J.E."/>
            <person name="Ambesi-Impiombato A."/>
            <person name="Apweiler R."/>
            <person name="Aturaliya R.N."/>
            <person name="Bailey T.L."/>
            <person name="Bansal M."/>
            <person name="Baxter L."/>
            <person name="Beisel K.W."/>
            <person name="Bersano T."/>
            <person name="Bono H."/>
            <person name="Chalk A.M."/>
            <person name="Chiu K.P."/>
            <person name="Choudhary V."/>
            <person name="Christoffels A."/>
            <person name="Clutterbuck D.R."/>
            <person name="Crowe M.L."/>
            <person name="Dalla E."/>
            <person name="Dalrymple B.P."/>
            <person name="de Bono B."/>
            <person name="Della Gatta G."/>
            <person name="di Bernardo D."/>
            <person name="Down T."/>
            <person name="Engstrom P."/>
            <person name="Fagiolini M."/>
            <person name="Faulkner G."/>
            <person name="Fletcher C.F."/>
            <person name="Fukushima T."/>
            <person name="Furuno M."/>
            <person name="Futaki S."/>
            <person name="Gariboldi M."/>
            <person name="Georgii-Hemming P."/>
            <person name="Gingeras T.R."/>
            <person name="Gojobori T."/>
            <person name="Green R.E."/>
            <person name="Gustincich S."/>
            <person name="Harbers M."/>
            <person name="Hayashi Y."/>
            <person name="Hensch T.K."/>
            <person name="Hirokawa N."/>
            <person name="Hill D."/>
            <person name="Huminiecki L."/>
            <person name="Iacono M."/>
            <person name="Ikeo K."/>
            <person name="Iwama A."/>
            <person name="Ishikawa T."/>
            <person name="Jakt M."/>
            <person name="Kanapin A."/>
            <person name="Katoh M."/>
            <person name="Kawasawa Y."/>
            <person name="Kelso J."/>
            <person name="Kitamura H."/>
            <person name="Kitano H."/>
            <person name="Kollias G."/>
            <person name="Krishnan S.P."/>
            <person name="Kruger A."/>
            <person name="Kummerfeld S.K."/>
            <person name="Kurochkin I.V."/>
            <person name="Lareau L.F."/>
            <person name="Lazarevic D."/>
            <person name="Lipovich L."/>
            <person name="Liu J."/>
            <person name="Liuni S."/>
            <person name="McWilliam S."/>
            <person name="Madan Babu M."/>
            <person name="Madera M."/>
            <person name="Marchionni L."/>
            <person name="Matsuda H."/>
            <person name="Matsuzawa S."/>
            <person name="Miki H."/>
            <person name="Mignone F."/>
            <person name="Miyake S."/>
            <person name="Morris K."/>
            <person name="Mottagui-Tabar S."/>
            <person name="Mulder N."/>
            <person name="Nakano N."/>
            <person name="Nakauchi H."/>
            <person name="Ng P."/>
            <person name="Nilsson R."/>
            <person name="Nishiguchi S."/>
            <person name="Nishikawa S."/>
            <person name="Nori F."/>
            <person name="Ohara O."/>
            <person name="Okazaki Y."/>
            <person name="Orlando V."/>
            <person name="Pang K.C."/>
            <person name="Pavan W.J."/>
            <person name="Pavesi G."/>
            <person name="Pesole G."/>
            <person name="Petrovsky N."/>
            <person name="Piazza S."/>
            <person name="Reed J."/>
            <person name="Reid J.F."/>
            <person name="Ring B.Z."/>
            <person name="Ringwald M."/>
            <person name="Rost B."/>
            <person name="Ruan Y."/>
            <person name="Salzberg S.L."/>
            <person name="Sandelin A."/>
            <person name="Schneider C."/>
            <person name="Schoenbach C."/>
            <person name="Sekiguchi K."/>
            <person name="Semple C.A."/>
            <person name="Seno S."/>
            <person name="Sessa L."/>
            <person name="Sheng Y."/>
            <person name="Shibata Y."/>
            <person name="Shimada H."/>
            <person name="Shimada K."/>
            <person name="Silva D."/>
            <person name="Sinclair B."/>
            <person name="Sperling S."/>
            <person name="Stupka E."/>
            <person name="Sugiura K."/>
            <person name="Sultana R."/>
            <person name="Takenaka Y."/>
            <person name="Taki K."/>
            <person name="Tammoja K."/>
            <person name="Tan S.L."/>
            <person name="Tang S."/>
            <person name="Taylor M.S."/>
            <person name="Tegner J."/>
            <person name="Teichmann S.A."/>
            <person name="Ueda H.R."/>
            <person name="van Nimwegen E."/>
            <person name="Verardo R."/>
            <person name="Wei C.L."/>
            <person name="Yagi K."/>
            <person name="Yamanishi H."/>
            <person name="Zabarovsky E."/>
            <person name="Zhu S."/>
            <person name="Zimmer A."/>
            <person name="Hide W."/>
            <person name="Bult C."/>
            <person name="Grimmond S.M."/>
            <person name="Teasdale R.D."/>
            <person name="Liu E.T."/>
            <person name="Brusic V."/>
            <person name="Quackenbush J."/>
            <person name="Wahlestedt C."/>
            <person name="Mattick J.S."/>
            <person name="Hume D.A."/>
            <person name="Kai C."/>
            <person name="Sasaki D."/>
            <person name="Tomaru Y."/>
            <person name="Fukuda S."/>
            <person name="Kanamori-Katayama M."/>
            <person name="Suzuki M."/>
            <person name="Aoki J."/>
            <person name="Arakawa T."/>
            <person name="Iida J."/>
            <person name="Imamura K."/>
            <person name="Itoh M."/>
            <person name="Kato T."/>
            <person name="Kawaji H."/>
            <person name="Kawagashira N."/>
            <person name="Kawashima T."/>
            <person name="Kojima M."/>
            <person name="Kondo S."/>
            <person name="Konno H."/>
            <person name="Nakano K."/>
            <person name="Ninomiya N."/>
            <person name="Nishio T."/>
            <person name="Okada M."/>
            <person name="Plessy C."/>
            <person name="Shibata K."/>
            <person name="Shiraki T."/>
            <person name="Suzuki S."/>
            <person name="Tagami M."/>
            <person name="Waki K."/>
            <person name="Watahiki A."/>
            <person name="Okamura-Oho Y."/>
            <person name="Suzuki H."/>
            <person name="Kawai J."/>
            <person name="Hayashizaki Y."/>
        </authorList>
    </citation>
    <scope>NUCLEOTIDE SEQUENCE [LARGE SCALE MRNA] (ISOFORM 3)</scope>
    <scope>NUCLEOTIDE SEQUENCE [LARGE SCALE MRNA] OF 1-1422 (ISOFORM 1)</scope>
    <source>
        <strain>C57BL/6J</strain>
        <strain>NOD</strain>
        <tissue>Dendritic cell</tissue>
        <tissue>Testis</tissue>
    </source>
</reference>
<reference key="3">
    <citation type="journal article" date="2010" name="Cell">
        <title>A tissue-specific atlas of mouse protein phosphorylation and expression.</title>
        <authorList>
            <person name="Huttlin E.L."/>
            <person name="Jedrychowski M.P."/>
            <person name="Elias J.E."/>
            <person name="Goswami T."/>
            <person name="Rad R."/>
            <person name="Beausoleil S.A."/>
            <person name="Villen J."/>
            <person name="Haas W."/>
            <person name="Sowa M.E."/>
            <person name="Gygi S.P."/>
        </authorList>
    </citation>
    <scope>IDENTIFICATION BY MASS SPECTROMETRY [LARGE SCALE ANALYSIS]</scope>
    <source>
        <tissue>Kidney</tissue>
    </source>
</reference>
<reference key="4">
    <citation type="journal article" date="2011" name="Cancer Res.">
        <title>Contribution of Abcc10 (Mrp7) to in vivo paclitaxel resistance as assessed in Abcc10(-/-) mice.</title>
        <authorList>
            <person name="Hopper-Borge E.A."/>
            <person name="Churchill T."/>
            <person name="Paulose C."/>
            <person name="Nicolas E."/>
            <person name="Jacobs J.D."/>
            <person name="Ngo O."/>
            <person name="Kuang Y."/>
            <person name="Grinberg A."/>
            <person name="Westphal H."/>
            <person name="Chen Z.S."/>
            <person name="Klein-Szanto A.J."/>
            <person name="Belinsky M.G."/>
            <person name="Kruh G.D."/>
        </authorList>
    </citation>
    <scope>DISRUPTION PHENOTYPE</scope>
</reference>
<dbReference type="EC" id="7.6.2.2" evidence="1"/>
<dbReference type="EC" id="7.6.2.3" evidence="1"/>
<dbReference type="EMBL" id="AF406642">
    <property type="protein sequence ID" value="AAM18535.1"/>
    <property type="molecule type" value="mRNA"/>
</dbReference>
<dbReference type="EMBL" id="AF417121">
    <property type="protein sequence ID" value="AAM18536.1"/>
    <property type="molecule type" value="mRNA"/>
</dbReference>
<dbReference type="EMBL" id="AK133240">
    <property type="protein sequence ID" value="BAE21573.1"/>
    <property type="molecule type" value="mRNA"/>
</dbReference>
<dbReference type="EMBL" id="AK170600">
    <property type="protein sequence ID" value="BAE41905.1"/>
    <property type="molecule type" value="mRNA"/>
</dbReference>
<dbReference type="CCDS" id="CCDS28825.1">
    <molecule id="Q8R4P9-2"/>
</dbReference>
<dbReference type="CCDS" id="CCDS50124.1">
    <molecule id="Q8R4P9-1"/>
</dbReference>
<dbReference type="CCDS" id="CCDS84315.1">
    <molecule id="Q8R4P9-3"/>
</dbReference>
<dbReference type="RefSeq" id="NP_001334325.1">
    <molecule id="Q8R4P9-3"/>
    <property type="nucleotide sequence ID" value="NM_001347396.1"/>
</dbReference>
<dbReference type="RefSeq" id="NP_660122.1">
    <molecule id="Q8R4P9-2"/>
    <property type="nucleotide sequence ID" value="NM_145140.2"/>
</dbReference>
<dbReference type="RefSeq" id="NP_733780.1">
    <molecule id="Q8R4P9-1"/>
    <property type="nucleotide sequence ID" value="NM_170680.2"/>
</dbReference>
<dbReference type="SMR" id="Q8R4P9"/>
<dbReference type="FunCoup" id="Q8R4P9">
    <property type="interactions" value="567"/>
</dbReference>
<dbReference type="STRING" id="10090.ENSMUSP00000038041"/>
<dbReference type="GlyGen" id="Q8R4P9">
    <property type="glycosylation" value="1 site"/>
</dbReference>
<dbReference type="iPTMnet" id="Q8R4P9"/>
<dbReference type="PhosphoSitePlus" id="Q8R4P9"/>
<dbReference type="SwissPalm" id="Q8R4P9"/>
<dbReference type="PaxDb" id="10090-ENSMUSP00000131843"/>
<dbReference type="ProteomicsDB" id="291412">
    <molecule id="Q8R4P9-1"/>
</dbReference>
<dbReference type="ProteomicsDB" id="291413">
    <molecule id="Q8R4P9-2"/>
</dbReference>
<dbReference type="ProteomicsDB" id="291414">
    <molecule id="Q8R4P9-3"/>
</dbReference>
<dbReference type="Pumba" id="Q8R4P9"/>
<dbReference type="Antibodypedia" id="30398">
    <property type="antibodies" value="271 antibodies from 30 providers"/>
</dbReference>
<dbReference type="DNASU" id="224814"/>
<dbReference type="Ensembl" id="ENSMUST00000047970.14">
    <molecule id="Q8R4P9-3"/>
    <property type="protein sequence ID" value="ENSMUSP00000038041.8"/>
    <property type="gene ID" value="ENSMUSG00000032842.14"/>
</dbReference>
<dbReference type="Ensembl" id="ENSMUST00000095261.10">
    <molecule id="Q8R4P9-2"/>
    <property type="protein sequence ID" value="ENSMUSP00000092895.4"/>
    <property type="gene ID" value="ENSMUSG00000032842.14"/>
</dbReference>
<dbReference type="Ensembl" id="ENSMUST00000167360.8">
    <molecule id="Q8R4P9-1"/>
    <property type="protein sequence ID" value="ENSMUSP00000131843.2"/>
    <property type="gene ID" value="ENSMUSG00000032842.14"/>
</dbReference>
<dbReference type="GeneID" id="224814"/>
<dbReference type="KEGG" id="mmu:224814"/>
<dbReference type="UCSC" id="uc008csn.1">
    <molecule id="Q8R4P9-2"/>
    <property type="organism name" value="mouse"/>
</dbReference>
<dbReference type="UCSC" id="uc008cso.1">
    <molecule id="Q8R4P9-1"/>
    <property type="organism name" value="mouse"/>
</dbReference>
<dbReference type="UCSC" id="uc012auq.1">
    <molecule id="Q8R4P9-3"/>
    <property type="organism name" value="mouse"/>
</dbReference>
<dbReference type="AGR" id="MGI:2386976"/>
<dbReference type="CTD" id="89845"/>
<dbReference type="MGI" id="MGI:2386976">
    <property type="gene designation" value="Abcc10"/>
</dbReference>
<dbReference type="VEuPathDB" id="HostDB:ENSMUSG00000032842"/>
<dbReference type="eggNOG" id="KOG0054">
    <property type="taxonomic scope" value="Eukaryota"/>
</dbReference>
<dbReference type="GeneTree" id="ENSGT00940000161082"/>
<dbReference type="HOGENOM" id="CLU_000604_27_1_1"/>
<dbReference type="InParanoid" id="Q8R4P9"/>
<dbReference type="OMA" id="PYAWPSQ"/>
<dbReference type="OrthoDB" id="76661at9989"/>
<dbReference type="PhylomeDB" id="Q8R4P9"/>
<dbReference type="TreeFam" id="TF105203"/>
<dbReference type="Reactome" id="R-MMU-382556">
    <property type="pathway name" value="ABC-family proteins mediated transport"/>
</dbReference>
<dbReference type="BioGRID-ORCS" id="224814">
    <property type="hits" value="3 hits in 77 CRISPR screens"/>
</dbReference>
<dbReference type="ChiTaRS" id="Abcc10">
    <property type="organism name" value="mouse"/>
</dbReference>
<dbReference type="PRO" id="PR:Q8R4P9"/>
<dbReference type="Proteomes" id="UP000000589">
    <property type="component" value="Chromosome 17"/>
</dbReference>
<dbReference type="RNAct" id="Q8R4P9">
    <property type="molecule type" value="protein"/>
</dbReference>
<dbReference type="Bgee" id="ENSMUSG00000032842">
    <property type="expression patterns" value="Expressed in substantia nigra and 127 other cell types or tissues"/>
</dbReference>
<dbReference type="ExpressionAtlas" id="Q8R4P9">
    <property type="expression patterns" value="baseline and differential"/>
</dbReference>
<dbReference type="GO" id="GO:0009925">
    <property type="term" value="C:basal plasma membrane"/>
    <property type="evidence" value="ECO:0000250"/>
    <property type="project" value="UniProtKB"/>
</dbReference>
<dbReference type="GO" id="GO:0016323">
    <property type="term" value="C:basolateral plasma membrane"/>
    <property type="evidence" value="ECO:0000250"/>
    <property type="project" value="UniProtKB"/>
</dbReference>
<dbReference type="GO" id="GO:0015431">
    <property type="term" value="F:ABC-type glutathione S-conjugate transporter activity"/>
    <property type="evidence" value="ECO:0000250"/>
    <property type="project" value="UniProtKB"/>
</dbReference>
<dbReference type="GO" id="GO:0140359">
    <property type="term" value="F:ABC-type transporter activity"/>
    <property type="evidence" value="ECO:0000250"/>
    <property type="project" value="UniProtKB"/>
</dbReference>
<dbReference type="GO" id="GO:0008559">
    <property type="term" value="F:ABC-type xenobiotic transporter activity"/>
    <property type="evidence" value="ECO:0000250"/>
    <property type="project" value="UniProtKB"/>
</dbReference>
<dbReference type="GO" id="GO:0005524">
    <property type="term" value="F:ATP binding"/>
    <property type="evidence" value="ECO:0007669"/>
    <property type="project" value="UniProtKB-KW"/>
</dbReference>
<dbReference type="GO" id="GO:0016887">
    <property type="term" value="F:ATP hydrolysis activity"/>
    <property type="evidence" value="ECO:0007669"/>
    <property type="project" value="InterPro"/>
</dbReference>
<dbReference type="GO" id="GO:0006691">
    <property type="term" value="P:leukotriene metabolic process"/>
    <property type="evidence" value="ECO:0000250"/>
    <property type="project" value="UniProtKB"/>
</dbReference>
<dbReference type="GO" id="GO:0071716">
    <property type="term" value="P:leukotriene transport"/>
    <property type="evidence" value="ECO:0000250"/>
    <property type="project" value="UniProtKB"/>
</dbReference>
<dbReference type="GO" id="GO:0006869">
    <property type="term" value="P:lipid transport"/>
    <property type="evidence" value="ECO:0007669"/>
    <property type="project" value="UniProtKB-KW"/>
</dbReference>
<dbReference type="CDD" id="cd18598">
    <property type="entry name" value="ABC_6TM_MRP7_D1_like"/>
    <property type="match status" value="1"/>
</dbReference>
<dbReference type="CDD" id="cd18605">
    <property type="entry name" value="ABC_6TM_MRP7_D2_like"/>
    <property type="match status" value="1"/>
</dbReference>
<dbReference type="CDD" id="cd03250">
    <property type="entry name" value="ABCC_MRP_domain1"/>
    <property type="match status" value="1"/>
</dbReference>
<dbReference type="CDD" id="cd03244">
    <property type="entry name" value="ABCC_MRP_domain2"/>
    <property type="match status" value="1"/>
</dbReference>
<dbReference type="FunFam" id="1.20.1560.10:FF:000037">
    <property type="entry name" value="ATP-binding cassette subfamily C member 10"/>
    <property type="match status" value="1"/>
</dbReference>
<dbReference type="FunFam" id="3.40.50.300:FF:001090">
    <property type="entry name" value="ATP-binding cassette subfamily C member 10"/>
    <property type="match status" value="1"/>
</dbReference>
<dbReference type="FunFam" id="3.40.50.300:FF:000163">
    <property type="entry name" value="Multidrug resistance-associated protein member 4"/>
    <property type="match status" value="1"/>
</dbReference>
<dbReference type="Gene3D" id="1.20.1560.10">
    <property type="entry name" value="ABC transporter type 1, transmembrane domain"/>
    <property type="match status" value="2"/>
</dbReference>
<dbReference type="Gene3D" id="3.40.50.300">
    <property type="entry name" value="P-loop containing nucleotide triphosphate hydrolases"/>
    <property type="match status" value="2"/>
</dbReference>
<dbReference type="InterPro" id="IPR003593">
    <property type="entry name" value="AAA+_ATPase"/>
</dbReference>
<dbReference type="InterPro" id="IPR011527">
    <property type="entry name" value="ABC1_TM_dom"/>
</dbReference>
<dbReference type="InterPro" id="IPR036640">
    <property type="entry name" value="ABC1_TM_sf"/>
</dbReference>
<dbReference type="InterPro" id="IPR003439">
    <property type="entry name" value="ABC_transporter-like_ATP-bd"/>
</dbReference>
<dbReference type="InterPro" id="IPR017871">
    <property type="entry name" value="ABC_transporter-like_CS"/>
</dbReference>
<dbReference type="InterPro" id="IPR050173">
    <property type="entry name" value="ABC_transporter_C-like"/>
</dbReference>
<dbReference type="InterPro" id="IPR027417">
    <property type="entry name" value="P-loop_NTPase"/>
</dbReference>
<dbReference type="PANTHER" id="PTHR24223">
    <property type="entry name" value="ATP-BINDING CASSETTE SUB-FAMILY C"/>
    <property type="match status" value="1"/>
</dbReference>
<dbReference type="PANTHER" id="PTHR24223:SF330">
    <property type="entry name" value="ATP-BINDING CASSETTE SUB-FAMILY C MEMBER 10"/>
    <property type="match status" value="1"/>
</dbReference>
<dbReference type="Pfam" id="PF00664">
    <property type="entry name" value="ABC_membrane"/>
    <property type="match status" value="2"/>
</dbReference>
<dbReference type="Pfam" id="PF00005">
    <property type="entry name" value="ABC_tran"/>
    <property type="match status" value="2"/>
</dbReference>
<dbReference type="SMART" id="SM00382">
    <property type="entry name" value="AAA"/>
    <property type="match status" value="2"/>
</dbReference>
<dbReference type="SUPFAM" id="SSF90123">
    <property type="entry name" value="ABC transporter transmembrane region"/>
    <property type="match status" value="2"/>
</dbReference>
<dbReference type="SUPFAM" id="SSF52540">
    <property type="entry name" value="P-loop containing nucleoside triphosphate hydrolases"/>
    <property type="match status" value="2"/>
</dbReference>
<dbReference type="PROSITE" id="PS50929">
    <property type="entry name" value="ABC_TM1F"/>
    <property type="match status" value="2"/>
</dbReference>
<dbReference type="PROSITE" id="PS00211">
    <property type="entry name" value="ABC_TRANSPORTER_1"/>
    <property type="match status" value="2"/>
</dbReference>
<dbReference type="PROSITE" id="PS50893">
    <property type="entry name" value="ABC_TRANSPORTER_2"/>
    <property type="match status" value="2"/>
</dbReference>
<sequence>MEGLLAQLCGTDAARPLPLWEGDTTGHCFTQLVLSALPHALLAVLSACHLGTPRTTNHSPALNPGWRLRLAASFLLSIFPLLDLLPVVLPPGSRPGPLWLEVLAGCVTAVAWFTHSLALWALVHSPHGRSRGPLALALAAFLPTPALVLTLLWHCQRGTFLPPLLPGPLGRVCLLILQLAAVLAYGLGWAAPGGPQEPWTHDPFLSSESQETEVAEDGESWLSRFSYAWLAPLLARGVRGELQQPRDTCRLPRRLHPAFLARVFQAHWKEGAQLWRALYRAFGCCYLALGLLKMVGTMLGFSGPLLLSLLVGFLEEGQEPLSHGLLYVLGLAGGTVISAVLQNQYGYEVRKVTLQARVAVLSTLYRKALKLGPSRPPTGEVLNLLGTDSERLLNFAGSFHEAWGLPLQLAITLYLLYQQVGMAFLAGLVLALLLVPVNKVIATRIMASNQEMLRHKDARVKLMTELLSGIRVIKFFRWEQALGDRVKACRTKELGRLRVIKYLDAACVYLWAALPVVICITIFITYVLMGHQLTATKVFTALALVRMLILPLNNFPWVINGLLESKVSLDRIQRFLDLPSYSPEAYYSPDPPAEPSTALELHEALFSWDPIGASQKTFISHLQVKKGMLVGIVGKVGCGKSSLLAAITGELHRLCGWVAVSELSKGFGLATQEPWIQCATIRDNILFGKTFDAQLYREVLEACALNDDLSILPAGDQTEVGEKGVTLSGGQRARIALARAVYQEKALYLLDDPLAAVDADVANHLLHRCILGVLSHTTRLLCTHRTEYLERADVVLLMEAGQLVRTGPPSEILPLVQAVPTAWAEKEQVATSGQSPSVCDLERTTEEELEVEQSTCGCLVQEESKSEGAVALHVYRAYWRAMGSGLAAAILVSLLLMQATRNGADWWLAHWLSQLKAGRNGSREDPASCSPGSTALFSPRLLLFSPGNLYTPLLSTPLHKAASNGTADVHFYLIVYATIAGVNSLCTLLRAVLFAAGALQAAASLHHRLLHRLLMAPVTFYDSTPSGRVLNRFSSDVACVDDSLPFLLNILLANSVGLLGLLAVLGSGLPWLLLLLPPLSFVYYSVQGYYRASFRELRRLGSLTWSPLYSHLADTLAGLPVLRAAGATYRFEEENQRLLELNQRCQFASYATMQWLDIRLQLMGAAVVSAIAGIALVQHQQGLANPGLVGLVLSYALSLTGLLSGLVSSFTQTEAMMVSVERLEEYSCDVPQEPHSQPLQSPHQQRISWLTQGSVEFQDVVLVYRPGLPNALDGVTFRVEPGEKLGIVGRTGSGKSSLFLVLFRLLEPNAGRVLLDNVDTSQLELAELRSQLAVIPQEPFLFSGTIRENLDPQGLHEDRALWQALEQCHLSEVAVAMGGLDGELGERGQNLSLGQRQLLCLARALLTDAKILCIDEATASVDQKTDQLLQQTICKRFANKTVLTIAHRLNTILNSDRVLVLQAGRVVELDSPSALRNQPHSLFQQLLQSSQQGAHSGPSGC</sequence>